<evidence type="ECO:0000250" key="1">
    <source>
        <dbReference type="UniProtKB" id="A6QDA0"/>
    </source>
</evidence>
<evidence type="ECO:0000250" key="2">
    <source>
        <dbReference type="UniProtKB" id="Q2G1N3"/>
    </source>
</evidence>
<evidence type="ECO:0000305" key="3"/>
<organism>
    <name type="scientific">Staphylococcus aureus (strain USA300 / TCH1516)</name>
    <dbReference type="NCBI Taxonomy" id="451516"/>
    <lineage>
        <taxon>Bacteria</taxon>
        <taxon>Bacillati</taxon>
        <taxon>Bacillota</taxon>
        <taxon>Bacilli</taxon>
        <taxon>Bacillales</taxon>
        <taxon>Staphylococcaceae</taxon>
        <taxon>Staphylococcus</taxon>
    </lineage>
</organism>
<dbReference type="EC" id="2.5.1.140" evidence="1"/>
<dbReference type="EMBL" id="CP000730">
    <property type="protein sequence ID" value="ABX28164.1"/>
    <property type="molecule type" value="Genomic_DNA"/>
</dbReference>
<dbReference type="RefSeq" id="WP_000570808.1">
    <property type="nucleotide sequence ID" value="NC_010079.1"/>
</dbReference>
<dbReference type="SMR" id="A8YZ41"/>
<dbReference type="KEGG" id="sax:USA300HOU_0127"/>
<dbReference type="HOGENOM" id="CLU_021018_1_0_9"/>
<dbReference type="GO" id="GO:0016765">
    <property type="term" value="F:transferase activity, transferring alkyl or aryl (other than methyl) groups"/>
    <property type="evidence" value="ECO:0007669"/>
    <property type="project" value="UniProtKB-ARBA"/>
</dbReference>
<dbReference type="GO" id="GO:0006535">
    <property type="term" value="P:cysteine biosynthetic process from serine"/>
    <property type="evidence" value="ECO:0007669"/>
    <property type="project" value="InterPro"/>
</dbReference>
<dbReference type="CDD" id="cd01561">
    <property type="entry name" value="CBS_like"/>
    <property type="match status" value="1"/>
</dbReference>
<dbReference type="Gene3D" id="3.40.50.1100">
    <property type="match status" value="2"/>
</dbReference>
<dbReference type="InterPro" id="IPR050214">
    <property type="entry name" value="Cys_Synth/Cystath_Beta-Synth"/>
</dbReference>
<dbReference type="InterPro" id="IPR001216">
    <property type="entry name" value="P-phosphate_BS"/>
</dbReference>
<dbReference type="InterPro" id="IPR023927">
    <property type="entry name" value="SbnA"/>
</dbReference>
<dbReference type="InterPro" id="IPR001926">
    <property type="entry name" value="TrpB-like_PALP"/>
</dbReference>
<dbReference type="InterPro" id="IPR036052">
    <property type="entry name" value="TrpB-like_PALP_sf"/>
</dbReference>
<dbReference type="NCBIfam" id="TIGR03945">
    <property type="entry name" value="PLP_SbnA_fam"/>
    <property type="match status" value="1"/>
</dbReference>
<dbReference type="PANTHER" id="PTHR10314">
    <property type="entry name" value="CYSTATHIONINE BETA-SYNTHASE"/>
    <property type="match status" value="1"/>
</dbReference>
<dbReference type="Pfam" id="PF00291">
    <property type="entry name" value="PALP"/>
    <property type="match status" value="1"/>
</dbReference>
<dbReference type="SUPFAM" id="SSF53686">
    <property type="entry name" value="Tryptophan synthase beta subunit-like PLP-dependent enzymes"/>
    <property type="match status" value="1"/>
</dbReference>
<dbReference type="PROSITE" id="PS00901">
    <property type="entry name" value="CYS_SYNTHASE"/>
    <property type="match status" value="1"/>
</dbReference>
<proteinExistence type="inferred from homology"/>
<accession>A8YZ41</accession>
<sequence length="326" mass="35897">MIEKSQACHDSLLDSVGQTPMVQLHQLFPKHEVFAKLEYMNPGGSMKDRPAKYIIEHGIKHGLITENTHLIESTSGNLGIALAMIAKIKGLKLTCVVDPKISPTNLKIIKSYGANVEMVEEPDAHGGYLMTRIAKVQELLATIDDAYWINQYANELNWQSHYHGAGTEIVETIKQPIDYFVAPVSTTGSIMGMSRKIKEVHPNAQIVAVDAKGSVIFGDKPINRELPGIGASRVPEILNRSEINQVIHVDDYQSALGCRKLIDYEGIFAGGSTGSIIAAIEQLITSIEEGATIVTILPDRGDRYLDLVYSDTWLEKMKSRQGVKSE</sequence>
<reference key="1">
    <citation type="journal article" date="2007" name="BMC Microbiol.">
        <title>Subtle genetic changes enhance virulence of methicillin resistant and sensitive Staphylococcus aureus.</title>
        <authorList>
            <person name="Highlander S.K."/>
            <person name="Hulten K.G."/>
            <person name="Qin X."/>
            <person name="Jiang H."/>
            <person name="Yerrapragada S."/>
            <person name="Mason E.O. Jr."/>
            <person name="Shang Y."/>
            <person name="Williams T.M."/>
            <person name="Fortunov R.M."/>
            <person name="Liu Y."/>
            <person name="Igboeli O."/>
            <person name="Petrosino J."/>
            <person name="Tirumalai M."/>
            <person name="Uzman A."/>
            <person name="Fox G.E."/>
            <person name="Cardenas A.M."/>
            <person name="Muzny D.M."/>
            <person name="Hemphill L."/>
            <person name="Ding Y."/>
            <person name="Dugan S."/>
            <person name="Blyth P.R."/>
            <person name="Buhay C.J."/>
            <person name="Dinh H.H."/>
            <person name="Hawes A.C."/>
            <person name="Holder M."/>
            <person name="Kovar C.L."/>
            <person name="Lee S.L."/>
            <person name="Liu W."/>
            <person name="Nazareth L.V."/>
            <person name="Wang Q."/>
            <person name="Zhou J."/>
            <person name="Kaplan S.L."/>
            <person name="Weinstock G.M."/>
        </authorList>
    </citation>
    <scope>NUCLEOTIDE SEQUENCE [LARGE SCALE GENOMIC DNA]</scope>
    <source>
        <strain>USA300 / TCH1516</strain>
    </source>
</reference>
<keyword id="KW-0663">Pyridoxal phosphate</keyword>
<keyword id="KW-0808">Transferase</keyword>
<protein>
    <recommendedName>
        <fullName evidence="3">N-(2-amino-2-carboxyethyl)-L-glutamate synthase</fullName>
        <shortName evidence="3">ACEGA synthase</shortName>
        <ecNumber evidence="1">2.5.1.140</ecNumber>
    </recommendedName>
</protein>
<name>SBNA_STAAT</name>
<feature type="chain" id="PRO_0000395026" description="N-(2-amino-2-carboxyethyl)-L-glutamate synthase">
    <location>
        <begin position="1"/>
        <end position="326"/>
    </location>
</feature>
<feature type="binding site" evidence="1">
    <location>
        <position position="77"/>
    </location>
    <ligand>
        <name>pyridoxal 5'-phosphate</name>
        <dbReference type="ChEBI" id="CHEBI:597326"/>
    </ligand>
</feature>
<feature type="binding site" evidence="1">
    <location>
        <begin position="185"/>
        <end position="189"/>
    </location>
    <ligand>
        <name>pyridoxal 5'-phosphate</name>
        <dbReference type="ChEBI" id="CHEBI:597326"/>
    </ligand>
</feature>
<feature type="binding site" evidence="1">
    <location>
        <position position="272"/>
    </location>
    <ligand>
        <name>pyridoxal 5'-phosphate</name>
        <dbReference type="ChEBI" id="CHEBI:597326"/>
    </ligand>
</feature>
<feature type="modified residue" description="N6-(pyridoxal phosphate)lysine" evidence="1">
    <location>
        <position position="47"/>
    </location>
</feature>
<gene>
    <name type="primary">sbnA</name>
    <name type="ordered locus">USA300HOU_0127</name>
</gene>
<comment type="function">
    <text evidence="1">Catalyzes the synthesis of N-((2S)-2-amino-2-carboxyethyl)-L-glutamate (ACEGA) from O-phospho-L-serine and L-glutamate. Involved in the biosynthesis of L-2,3-diaminopropionic acid (L-Dap), a precursor of staphyloferrin B and antibiotics.</text>
</comment>
<comment type="catalytic activity">
    <reaction evidence="1">
        <text>O-phospho-L-serine + L-glutamate = N-[(2S)-2-amino-2-carboxyethyl]-L-glutamate + phosphate + H(+)</text>
        <dbReference type="Rhea" id="RHEA:52384"/>
        <dbReference type="ChEBI" id="CHEBI:15378"/>
        <dbReference type="ChEBI" id="CHEBI:29985"/>
        <dbReference type="ChEBI" id="CHEBI:43474"/>
        <dbReference type="ChEBI" id="CHEBI:57524"/>
        <dbReference type="ChEBI" id="CHEBI:134610"/>
        <dbReference type="EC" id="2.5.1.140"/>
    </reaction>
</comment>
<comment type="cofactor">
    <cofactor evidence="1">
        <name>pyridoxal 5'-phosphate</name>
        <dbReference type="ChEBI" id="CHEBI:597326"/>
    </cofactor>
</comment>
<comment type="pathway">
    <text evidence="1">Siderophore biosynthesis.</text>
</comment>
<comment type="subunit">
    <text evidence="1">Homodimer.</text>
</comment>
<comment type="induction">
    <text evidence="2">Up-regulated under iron-deficient growth conditions. Repressed by Fur under iron-rich growth conditions.</text>
</comment>
<comment type="similarity">
    <text evidence="3">Belongs to the cysteine synthase/cystathionine beta-synthase family. SbnA subfamily.</text>
</comment>